<accession>Q396P0</accession>
<sequence>MSLAGKKITVHDMSLRDGMHPKRHQITLDQMRNIARGLDAAGVPLIEVTHGDGLGGASVNYGFPAHTDEAYLSAVIPELKQAKVSALLLPGIGTVEHLRMAHELGVGTIRVATHCTEADVSEQHIGLARTLGLDTVGFLMMAHMSSPEQLVVQAKLMESYGANCIYITDSAGHMLPDDVTARISQVRDALKPETELGFHGHHNLAMGVANSVAAVAAGANRIDAAAAGLGAGAGNTPMEVFVAVCDRMGIETGVDVFAISDVAEDLVVPIMDAPIRLDRDALTLGYAGVYSSFLLFAKRAEAKYGIPARDILVELGRQRLVGGQEDMIEDAALTMVRAREVVA</sequence>
<reference key="1">
    <citation type="submission" date="2005-10" db="EMBL/GenBank/DDBJ databases">
        <title>Complete sequence of chromosome 2 of Burkholderia sp. 383.</title>
        <authorList>
            <consortium name="US DOE Joint Genome Institute"/>
            <person name="Copeland A."/>
            <person name="Lucas S."/>
            <person name="Lapidus A."/>
            <person name="Barry K."/>
            <person name="Detter J.C."/>
            <person name="Glavina T."/>
            <person name="Hammon N."/>
            <person name="Israni S."/>
            <person name="Pitluck S."/>
            <person name="Chain P."/>
            <person name="Malfatti S."/>
            <person name="Shin M."/>
            <person name="Vergez L."/>
            <person name="Schmutz J."/>
            <person name="Larimer F."/>
            <person name="Land M."/>
            <person name="Kyrpides N."/>
            <person name="Lykidis A."/>
            <person name="Richardson P."/>
        </authorList>
    </citation>
    <scope>NUCLEOTIDE SEQUENCE [LARGE SCALE GENOMIC DNA]</scope>
    <source>
        <strain>ATCC 17760 / DSM 23089 / LMG 22485 / NCIMB 9086 / R18194 / 383</strain>
    </source>
</reference>
<gene>
    <name type="ordered locus">Bcep18194_B1457</name>
</gene>
<feature type="chain" id="PRO_0000387804" description="4-hydroxy-2-oxovalerate aldolase 2">
    <location>
        <begin position="1"/>
        <end position="343"/>
    </location>
</feature>
<feature type="domain" description="Pyruvate carboxyltransferase" evidence="1">
    <location>
        <begin position="8"/>
        <end position="260"/>
    </location>
</feature>
<feature type="active site" description="Proton acceptor" evidence="1">
    <location>
        <position position="20"/>
    </location>
</feature>
<feature type="binding site" evidence="1">
    <location>
        <begin position="16"/>
        <end position="17"/>
    </location>
    <ligand>
        <name>substrate</name>
    </ligand>
</feature>
<feature type="binding site" evidence="1">
    <location>
        <position position="17"/>
    </location>
    <ligand>
        <name>Mn(2+)</name>
        <dbReference type="ChEBI" id="CHEBI:29035"/>
    </ligand>
</feature>
<feature type="binding site" evidence="1">
    <location>
        <position position="170"/>
    </location>
    <ligand>
        <name>substrate</name>
    </ligand>
</feature>
<feature type="binding site" evidence="1">
    <location>
        <position position="199"/>
    </location>
    <ligand>
        <name>Mn(2+)</name>
        <dbReference type="ChEBI" id="CHEBI:29035"/>
    </ligand>
</feature>
<feature type="binding site" evidence="1">
    <location>
        <position position="199"/>
    </location>
    <ligand>
        <name>substrate</name>
    </ligand>
</feature>
<feature type="binding site" evidence="1">
    <location>
        <position position="201"/>
    </location>
    <ligand>
        <name>Mn(2+)</name>
        <dbReference type="ChEBI" id="CHEBI:29035"/>
    </ligand>
</feature>
<feature type="binding site" evidence="1">
    <location>
        <position position="290"/>
    </location>
    <ligand>
        <name>substrate</name>
    </ligand>
</feature>
<feature type="site" description="Transition state stabilizer" evidence="1">
    <location>
        <position position="16"/>
    </location>
</feature>
<organism>
    <name type="scientific">Burkholderia lata (strain ATCC 17760 / DSM 23089 / LMG 22485 / NCIMB 9086 / R18194 / 383)</name>
    <dbReference type="NCBI Taxonomy" id="482957"/>
    <lineage>
        <taxon>Bacteria</taxon>
        <taxon>Pseudomonadati</taxon>
        <taxon>Pseudomonadota</taxon>
        <taxon>Betaproteobacteria</taxon>
        <taxon>Burkholderiales</taxon>
        <taxon>Burkholderiaceae</taxon>
        <taxon>Burkholderia</taxon>
        <taxon>Burkholderia cepacia complex</taxon>
    </lineage>
</organism>
<comment type="catalytic activity">
    <reaction evidence="1">
        <text>(S)-4-hydroxy-2-oxopentanoate = acetaldehyde + pyruvate</text>
        <dbReference type="Rhea" id="RHEA:22624"/>
        <dbReference type="ChEBI" id="CHEBI:15343"/>
        <dbReference type="ChEBI" id="CHEBI:15361"/>
        <dbReference type="ChEBI" id="CHEBI:73143"/>
        <dbReference type="EC" id="4.1.3.39"/>
    </reaction>
</comment>
<comment type="similarity">
    <text evidence="1">Belongs to the 4-hydroxy-2-oxovalerate aldolase family.</text>
</comment>
<proteinExistence type="inferred from homology"/>
<protein>
    <recommendedName>
        <fullName evidence="1">4-hydroxy-2-oxovalerate aldolase 2</fullName>
        <shortName evidence="1">HOA 2</shortName>
        <ecNumber evidence="1">4.1.3.39</ecNumber>
    </recommendedName>
    <alternativeName>
        <fullName evidence="1">4-hydroxy-2-keto-pentanoic acid aldolase 2</fullName>
    </alternativeName>
    <alternativeName>
        <fullName evidence="1">4-hydroxy-2-oxopentanoate aldolase 2</fullName>
    </alternativeName>
</protein>
<dbReference type="EC" id="4.1.3.39" evidence="1"/>
<dbReference type="EMBL" id="CP000152">
    <property type="protein sequence ID" value="ABB11571.1"/>
    <property type="molecule type" value="Genomic_DNA"/>
</dbReference>
<dbReference type="RefSeq" id="WP_011355060.1">
    <property type="nucleotide sequence ID" value="NC_007511.1"/>
</dbReference>
<dbReference type="SMR" id="Q396P0"/>
<dbReference type="GeneID" id="45097803"/>
<dbReference type="KEGG" id="bur:Bcep18194_B1457"/>
<dbReference type="PATRIC" id="fig|482957.22.peg.5153"/>
<dbReference type="HOGENOM" id="CLU_049173_0_0_4"/>
<dbReference type="Proteomes" id="UP000002705">
    <property type="component" value="Chromosome 2"/>
</dbReference>
<dbReference type="GO" id="GO:0003852">
    <property type="term" value="F:2-isopropylmalate synthase activity"/>
    <property type="evidence" value="ECO:0007669"/>
    <property type="project" value="TreeGrafter"/>
</dbReference>
<dbReference type="GO" id="GO:0008701">
    <property type="term" value="F:4-hydroxy-2-oxovalerate aldolase activity"/>
    <property type="evidence" value="ECO:0007669"/>
    <property type="project" value="UniProtKB-UniRule"/>
</dbReference>
<dbReference type="GO" id="GO:0030145">
    <property type="term" value="F:manganese ion binding"/>
    <property type="evidence" value="ECO:0007669"/>
    <property type="project" value="UniProtKB-UniRule"/>
</dbReference>
<dbReference type="GO" id="GO:0009056">
    <property type="term" value="P:catabolic process"/>
    <property type="evidence" value="ECO:0007669"/>
    <property type="project" value="UniProtKB-KW"/>
</dbReference>
<dbReference type="GO" id="GO:0009098">
    <property type="term" value="P:L-leucine biosynthetic process"/>
    <property type="evidence" value="ECO:0007669"/>
    <property type="project" value="TreeGrafter"/>
</dbReference>
<dbReference type="CDD" id="cd07943">
    <property type="entry name" value="DRE_TIM_HOA"/>
    <property type="match status" value="1"/>
</dbReference>
<dbReference type="Gene3D" id="1.10.8.60">
    <property type="match status" value="1"/>
</dbReference>
<dbReference type="Gene3D" id="3.20.20.70">
    <property type="entry name" value="Aldolase class I"/>
    <property type="match status" value="1"/>
</dbReference>
<dbReference type="HAMAP" id="MF_01656">
    <property type="entry name" value="HOA"/>
    <property type="match status" value="1"/>
</dbReference>
<dbReference type="InterPro" id="IPR050073">
    <property type="entry name" value="2-IPM_HCS-like"/>
</dbReference>
<dbReference type="InterPro" id="IPR017629">
    <property type="entry name" value="4OH_2_O-val_aldolase"/>
</dbReference>
<dbReference type="InterPro" id="IPR013785">
    <property type="entry name" value="Aldolase_TIM"/>
</dbReference>
<dbReference type="InterPro" id="IPR012425">
    <property type="entry name" value="DmpG_comm"/>
</dbReference>
<dbReference type="InterPro" id="IPR035685">
    <property type="entry name" value="DRE_TIM_HOA"/>
</dbReference>
<dbReference type="InterPro" id="IPR000891">
    <property type="entry name" value="PYR_CT"/>
</dbReference>
<dbReference type="NCBIfam" id="TIGR03217">
    <property type="entry name" value="4OH_2_O_val_ald"/>
    <property type="match status" value="1"/>
</dbReference>
<dbReference type="NCBIfam" id="NF006049">
    <property type="entry name" value="PRK08195.1"/>
    <property type="match status" value="1"/>
</dbReference>
<dbReference type="PANTHER" id="PTHR10277:SF9">
    <property type="entry name" value="2-ISOPROPYLMALATE SYNTHASE 1, CHLOROPLASTIC-RELATED"/>
    <property type="match status" value="1"/>
</dbReference>
<dbReference type="PANTHER" id="PTHR10277">
    <property type="entry name" value="HOMOCITRATE SYNTHASE-RELATED"/>
    <property type="match status" value="1"/>
</dbReference>
<dbReference type="Pfam" id="PF07836">
    <property type="entry name" value="DmpG_comm"/>
    <property type="match status" value="1"/>
</dbReference>
<dbReference type="Pfam" id="PF00682">
    <property type="entry name" value="HMGL-like"/>
    <property type="match status" value="1"/>
</dbReference>
<dbReference type="SUPFAM" id="SSF51569">
    <property type="entry name" value="Aldolase"/>
    <property type="match status" value="1"/>
</dbReference>
<dbReference type="SUPFAM" id="SSF89000">
    <property type="entry name" value="post-HMGL domain-like"/>
    <property type="match status" value="1"/>
</dbReference>
<dbReference type="PROSITE" id="PS50991">
    <property type="entry name" value="PYR_CT"/>
    <property type="match status" value="1"/>
</dbReference>
<name>HOA2_BURL3</name>
<evidence type="ECO:0000255" key="1">
    <source>
        <dbReference type="HAMAP-Rule" id="MF_01656"/>
    </source>
</evidence>
<keyword id="KW-0058">Aromatic hydrocarbons catabolism</keyword>
<keyword id="KW-0456">Lyase</keyword>
<keyword id="KW-0464">Manganese</keyword>
<keyword id="KW-0479">Metal-binding</keyword>